<protein>
    <recommendedName>
        <fullName evidence="1">RNA polymerase sigma factor RpoD</fullName>
    </recommendedName>
    <alternativeName>
        <fullName evidence="1">Sigma-70</fullName>
    </alternativeName>
</protein>
<dbReference type="EMBL" id="AE009442">
    <property type="protein sequence ID" value="AAO28466.1"/>
    <property type="status" value="ALT_INIT"/>
    <property type="molecule type" value="Genomic_DNA"/>
</dbReference>
<dbReference type="RefSeq" id="WP_014607668.1">
    <property type="nucleotide sequence ID" value="NC_004556.1"/>
</dbReference>
<dbReference type="SMR" id="Q87DT7"/>
<dbReference type="GeneID" id="93904308"/>
<dbReference type="KEGG" id="xft:PD_0593"/>
<dbReference type="HOGENOM" id="CLU_014793_7_0_6"/>
<dbReference type="Proteomes" id="UP000002516">
    <property type="component" value="Chromosome"/>
</dbReference>
<dbReference type="GO" id="GO:0005737">
    <property type="term" value="C:cytoplasm"/>
    <property type="evidence" value="ECO:0007669"/>
    <property type="project" value="UniProtKB-SubCell"/>
</dbReference>
<dbReference type="GO" id="GO:0003677">
    <property type="term" value="F:DNA binding"/>
    <property type="evidence" value="ECO:0007669"/>
    <property type="project" value="UniProtKB-UniRule"/>
</dbReference>
<dbReference type="GO" id="GO:0016987">
    <property type="term" value="F:sigma factor activity"/>
    <property type="evidence" value="ECO:0007669"/>
    <property type="project" value="UniProtKB-UniRule"/>
</dbReference>
<dbReference type="GO" id="GO:0006352">
    <property type="term" value="P:DNA-templated transcription initiation"/>
    <property type="evidence" value="ECO:0007669"/>
    <property type="project" value="UniProtKB-UniRule"/>
</dbReference>
<dbReference type="CDD" id="cd06171">
    <property type="entry name" value="Sigma70_r4"/>
    <property type="match status" value="1"/>
</dbReference>
<dbReference type="FunFam" id="1.10.220.120:FF:000001">
    <property type="entry name" value="RNA polymerase sigma factor RpoD"/>
    <property type="match status" value="1"/>
</dbReference>
<dbReference type="FunFam" id="1.10.601.10:FF:000002">
    <property type="entry name" value="RNA polymerase sigma factor RpoD"/>
    <property type="match status" value="1"/>
</dbReference>
<dbReference type="FunFam" id="1.10.10.10:FF:000002">
    <property type="entry name" value="RNA polymerase sigma factor SigA"/>
    <property type="match status" value="1"/>
</dbReference>
<dbReference type="FunFam" id="1.10.10.10:FF:000004">
    <property type="entry name" value="RNA polymerase sigma factor SigA"/>
    <property type="match status" value="1"/>
</dbReference>
<dbReference type="Gene3D" id="1.10.601.10">
    <property type="entry name" value="RNA Polymerase Primary Sigma Factor"/>
    <property type="match status" value="1"/>
</dbReference>
<dbReference type="Gene3D" id="1.10.220.120">
    <property type="entry name" value="Sigma-70 factor, region 1.1"/>
    <property type="match status" value="1"/>
</dbReference>
<dbReference type="Gene3D" id="1.10.10.10">
    <property type="entry name" value="Winged helix-like DNA-binding domain superfamily/Winged helix DNA-binding domain"/>
    <property type="match status" value="2"/>
</dbReference>
<dbReference type="HAMAP" id="MF_00963">
    <property type="entry name" value="Sigma70_RpoD_SigA"/>
    <property type="match status" value="1"/>
</dbReference>
<dbReference type="InterPro" id="IPR014284">
    <property type="entry name" value="RNA_pol_sigma-70_dom"/>
</dbReference>
<dbReference type="InterPro" id="IPR000943">
    <property type="entry name" value="RNA_pol_sigma70"/>
</dbReference>
<dbReference type="InterPro" id="IPR009042">
    <property type="entry name" value="RNA_pol_sigma70_r1_2"/>
</dbReference>
<dbReference type="InterPro" id="IPR007627">
    <property type="entry name" value="RNA_pol_sigma70_r2"/>
</dbReference>
<dbReference type="InterPro" id="IPR007624">
    <property type="entry name" value="RNA_pol_sigma70_r3"/>
</dbReference>
<dbReference type="InterPro" id="IPR007630">
    <property type="entry name" value="RNA_pol_sigma70_r4"/>
</dbReference>
<dbReference type="InterPro" id="IPR007631">
    <property type="entry name" value="RNA_pol_sigma_70_non-ess"/>
</dbReference>
<dbReference type="InterPro" id="IPR007127">
    <property type="entry name" value="RNA_pol_sigma_70_r1_1"/>
</dbReference>
<dbReference type="InterPro" id="IPR042189">
    <property type="entry name" value="RNA_pol_sigma_70_r1_1_sf"/>
</dbReference>
<dbReference type="InterPro" id="IPR013325">
    <property type="entry name" value="RNA_pol_sigma_r2"/>
</dbReference>
<dbReference type="InterPro" id="IPR013324">
    <property type="entry name" value="RNA_pol_sigma_r3/r4-like"/>
</dbReference>
<dbReference type="InterPro" id="IPR012760">
    <property type="entry name" value="RNA_pol_sigma_RpoD_C"/>
</dbReference>
<dbReference type="InterPro" id="IPR050239">
    <property type="entry name" value="Sigma-70_RNA_pol_init_factors"/>
</dbReference>
<dbReference type="InterPro" id="IPR028630">
    <property type="entry name" value="Sigma70_RpoD"/>
</dbReference>
<dbReference type="InterPro" id="IPR036388">
    <property type="entry name" value="WH-like_DNA-bd_sf"/>
</dbReference>
<dbReference type="NCBIfam" id="NF004208">
    <property type="entry name" value="PRK05658.1"/>
    <property type="match status" value="1"/>
</dbReference>
<dbReference type="NCBIfam" id="TIGR02393">
    <property type="entry name" value="RpoD_Cterm"/>
    <property type="match status" value="1"/>
</dbReference>
<dbReference type="NCBIfam" id="TIGR02937">
    <property type="entry name" value="sigma70-ECF"/>
    <property type="match status" value="1"/>
</dbReference>
<dbReference type="PANTHER" id="PTHR30603">
    <property type="entry name" value="RNA POLYMERASE SIGMA FACTOR RPO"/>
    <property type="match status" value="1"/>
</dbReference>
<dbReference type="PANTHER" id="PTHR30603:SF60">
    <property type="entry name" value="RNA POLYMERASE SIGMA FACTOR RPOD"/>
    <property type="match status" value="1"/>
</dbReference>
<dbReference type="Pfam" id="PF04546">
    <property type="entry name" value="Sigma70_ner"/>
    <property type="match status" value="1"/>
</dbReference>
<dbReference type="Pfam" id="PF03979">
    <property type="entry name" value="Sigma70_r1_1"/>
    <property type="match status" value="1"/>
</dbReference>
<dbReference type="Pfam" id="PF00140">
    <property type="entry name" value="Sigma70_r1_2"/>
    <property type="match status" value="1"/>
</dbReference>
<dbReference type="Pfam" id="PF04542">
    <property type="entry name" value="Sigma70_r2"/>
    <property type="match status" value="1"/>
</dbReference>
<dbReference type="Pfam" id="PF04539">
    <property type="entry name" value="Sigma70_r3"/>
    <property type="match status" value="1"/>
</dbReference>
<dbReference type="Pfam" id="PF04545">
    <property type="entry name" value="Sigma70_r4"/>
    <property type="match status" value="1"/>
</dbReference>
<dbReference type="PRINTS" id="PR00046">
    <property type="entry name" value="SIGMA70FCT"/>
</dbReference>
<dbReference type="SUPFAM" id="SSF88946">
    <property type="entry name" value="Sigma2 domain of RNA polymerase sigma factors"/>
    <property type="match status" value="1"/>
</dbReference>
<dbReference type="SUPFAM" id="SSF88659">
    <property type="entry name" value="Sigma3 and sigma4 domains of RNA polymerase sigma factors"/>
    <property type="match status" value="2"/>
</dbReference>
<dbReference type="PROSITE" id="PS00715">
    <property type="entry name" value="SIGMA70_1"/>
    <property type="match status" value="1"/>
</dbReference>
<dbReference type="PROSITE" id="PS00716">
    <property type="entry name" value="SIGMA70_2"/>
    <property type="match status" value="1"/>
</dbReference>
<comment type="function">
    <text evidence="1">Sigma factors are initiation factors that promote the attachment of RNA polymerase to specific initiation sites and are then released. This sigma factor is the primary sigma factor during exponential growth.</text>
</comment>
<comment type="subunit">
    <text evidence="1">Interacts transiently with the RNA polymerase catalytic core.</text>
</comment>
<comment type="subcellular location">
    <subcellularLocation>
        <location evidence="1">Cytoplasm</location>
    </subcellularLocation>
</comment>
<comment type="similarity">
    <text evidence="1">Belongs to the sigma-70 factor family. RpoD/SigA subfamily.</text>
</comment>
<comment type="sequence caution" evidence="3">
    <conflict type="erroneous initiation">
        <sequence resource="EMBL-CDS" id="AAO28466"/>
    </conflict>
</comment>
<proteinExistence type="inferred from homology"/>
<gene>
    <name evidence="1" type="primary">rpoD</name>
    <name type="ordered locus">PD_0593</name>
</gene>
<reference key="1">
    <citation type="journal article" date="2003" name="J. Bacteriol.">
        <title>Comparative analyses of the complete genome sequences of Pierce's disease and citrus variegated chlorosis strains of Xylella fastidiosa.</title>
        <authorList>
            <person name="Van Sluys M.A."/>
            <person name="de Oliveira M.C."/>
            <person name="Monteiro-Vitorello C.B."/>
            <person name="Miyaki C.Y."/>
            <person name="Furlan L.R."/>
            <person name="Camargo L.E.A."/>
            <person name="da Silva A.C.R."/>
            <person name="Moon D.H."/>
            <person name="Takita M.A."/>
            <person name="Lemos E.G.M."/>
            <person name="Machado M.A."/>
            <person name="Ferro M.I.T."/>
            <person name="da Silva F.R."/>
            <person name="Goldman M.H.S."/>
            <person name="Goldman G.H."/>
            <person name="Lemos M.V.F."/>
            <person name="El-Dorry H."/>
            <person name="Tsai S.M."/>
            <person name="Carrer H."/>
            <person name="Carraro D.M."/>
            <person name="de Oliveira R.C."/>
            <person name="Nunes L.R."/>
            <person name="Siqueira W.J."/>
            <person name="Coutinho L.L."/>
            <person name="Kimura E.T."/>
            <person name="Ferro E.S."/>
            <person name="Harakava R."/>
            <person name="Kuramae E.E."/>
            <person name="Marino C.L."/>
            <person name="Giglioti E."/>
            <person name="Abreu I.L."/>
            <person name="Alves L.M.C."/>
            <person name="do Amaral A.M."/>
            <person name="Baia G.S."/>
            <person name="Blanco S.R."/>
            <person name="Brito M.S."/>
            <person name="Cannavan F.S."/>
            <person name="Celestino A.V."/>
            <person name="da Cunha A.F."/>
            <person name="Fenille R.C."/>
            <person name="Ferro J.A."/>
            <person name="Formighieri E.F."/>
            <person name="Kishi L.T."/>
            <person name="Leoni S.G."/>
            <person name="Oliveira A.R."/>
            <person name="Rosa V.E. Jr."/>
            <person name="Sassaki F.T."/>
            <person name="Sena J.A.D."/>
            <person name="de Souza A.A."/>
            <person name="Truffi D."/>
            <person name="Tsukumo F."/>
            <person name="Yanai G.M."/>
            <person name="Zaros L.G."/>
            <person name="Civerolo E.L."/>
            <person name="Simpson A.J.G."/>
            <person name="Almeida N.F. Jr."/>
            <person name="Setubal J.C."/>
            <person name="Kitajima J.P."/>
        </authorList>
    </citation>
    <scope>NUCLEOTIDE SEQUENCE [LARGE SCALE GENOMIC DNA]</scope>
    <source>
        <strain>Temecula1 / ATCC 700964</strain>
    </source>
</reference>
<keyword id="KW-0963">Cytoplasm</keyword>
<keyword id="KW-0238">DNA-binding</keyword>
<keyword id="KW-1185">Reference proteome</keyword>
<keyword id="KW-0731">Sigma factor</keyword>
<keyword id="KW-0804">Transcription</keyword>
<keyword id="KW-0805">Transcription regulation</keyword>
<evidence type="ECO:0000255" key="1">
    <source>
        <dbReference type="HAMAP-Rule" id="MF_00963"/>
    </source>
</evidence>
<evidence type="ECO:0000256" key="2">
    <source>
        <dbReference type="SAM" id="MobiDB-lite"/>
    </source>
</evidence>
<evidence type="ECO:0000305" key="3"/>
<feature type="chain" id="PRO_0000093934" description="RNA polymerase sigma factor RpoD">
    <location>
        <begin position="1"/>
        <end position="618"/>
    </location>
</feature>
<feature type="DNA-binding region" description="H-T-H motif" evidence="1">
    <location>
        <begin position="577"/>
        <end position="596"/>
    </location>
</feature>
<feature type="region of interest" description="Disordered" evidence="2">
    <location>
        <begin position="197"/>
        <end position="216"/>
    </location>
</feature>
<feature type="region of interest" description="Sigma-70 factor domain-2" evidence="1">
    <location>
        <begin position="383"/>
        <end position="453"/>
    </location>
</feature>
<feature type="region of interest" description="Sigma-70 factor domain-3" evidence="1">
    <location>
        <begin position="462"/>
        <end position="538"/>
    </location>
</feature>
<feature type="region of interest" description="Sigma-70 factor domain-4" evidence="1">
    <location>
        <begin position="551"/>
        <end position="604"/>
    </location>
</feature>
<feature type="short sequence motif" description="Interaction with polymerase core subunit RpoC">
    <location>
        <begin position="407"/>
        <end position="410"/>
    </location>
</feature>
<feature type="compositionally biased region" description="Acidic residues" evidence="2">
    <location>
        <begin position="197"/>
        <end position="211"/>
    </location>
</feature>
<name>RPOD_XYLFT</name>
<accession>Q87DT7</accession>
<sequence length="618" mass="69937">MSNERTAQQSDIKQLISKGLEQGYLTYAEVNDHLPEDLVDPDQIEDIIGMINGMGIEVHEVAPDAETLLLNEGNTGNREVDDTAAEEAAAALSALDTEAGRTTDPVRMYMREMGTVELLTREGEIAIAKRIEEGLSEVQAALGAFPLSTELLLSEYELHKEGKRRLTEVVVGFNDLIEEDNSVTSSVDVTDESIVEVDEEDDDSVGNDEDAPMIGPDPAEVASRIESLSTEYAKFKKLYAKHGPEHKAVIKVREDVAAIFVTFKLSLPLTDLLVQQLQNMVNSVKDHERKVLHLATNVAKMPRKDFIRSWENNQTNLEWVEDAIKRKQKWSSALRDIKDQITAEQQASIDLEKVNSLTLADIKEINRMMVYGEAKASKAKKEMVEANLRLVISIAKKYTNRGLQFLDLIQEGNIGLMKAVCKFEHRRGFKFSTYATWWIRQAITRSIADQARTIRIPVHMIETINKLNRISRQMLQQFGREATPEELAKEMDMPEDKIRKVMKIAKEPISMETPIGDDEDSHLGDFIEDPNVESPVDTTTNVNLSETVREVLAGLTPREAKVLRMRFGIDMNTDHTLEEVGKQFDVTRERIRQIEAKALRKLRHPSRSEQLRSFLDID</sequence>
<organism>
    <name type="scientific">Xylella fastidiosa (strain Temecula1 / ATCC 700964)</name>
    <dbReference type="NCBI Taxonomy" id="183190"/>
    <lineage>
        <taxon>Bacteria</taxon>
        <taxon>Pseudomonadati</taxon>
        <taxon>Pseudomonadota</taxon>
        <taxon>Gammaproteobacteria</taxon>
        <taxon>Lysobacterales</taxon>
        <taxon>Lysobacteraceae</taxon>
        <taxon>Xylella</taxon>
    </lineage>
</organism>